<dbReference type="EC" id="1.7.2.2" evidence="1"/>
<dbReference type="EMBL" id="AE016795">
    <property type="protein sequence ID" value="AAO11359.1"/>
    <property type="molecule type" value="Genomic_DNA"/>
</dbReference>
<dbReference type="RefSeq" id="WP_011080841.1">
    <property type="nucleotide sequence ID" value="NC_004459.3"/>
</dbReference>
<dbReference type="SMR" id="Q8D8E5"/>
<dbReference type="KEGG" id="vvu:VV1_3035"/>
<dbReference type="HOGENOM" id="CLU_035040_1_0_6"/>
<dbReference type="UniPathway" id="UPA00653"/>
<dbReference type="Proteomes" id="UP000002275">
    <property type="component" value="Chromosome 1"/>
</dbReference>
<dbReference type="GO" id="GO:0030288">
    <property type="term" value="C:outer membrane-bounded periplasmic space"/>
    <property type="evidence" value="ECO:0007669"/>
    <property type="project" value="TreeGrafter"/>
</dbReference>
<dbReference type="GO" id="GO:0005509">
    <property type="term" value="F:calcium ion binding"/>
    <property type="evidence" value="ECO:0007669"/>
    <property type="project" value="UniProtKB-UniRule"/>
</dbReference>
<dbReference type="GO" id="GO:0020037">
    <property type="term" value="F:heme binding"/>
    <property type="evidence" value="ECO:0007669"/>
    <property type="project" value="InterPro"/>
</dbReference>
<dbReference type="GO" id="GO:0005506">
    <property type="term" value="F:iron ion binding"/>
    <property type="evidence" value="ECO:0007669"/>
    <property type="project" value="UniProtKB-UniRule"/>
</dbReference>
<dbReference type="GO" id="GO:0042279">
    <property type="term" value="F:nitrite reductase (cytochrome, ammonia-forming) activity"/>
    <property type="evidence" value="ECO:0007669"/>
    <property type="project" value="UniProtKB-UniRule"/>
</dbReference>
<dbReference type="GO" id="GO:0019645">
    <property type="term" value="P:anaerobic electron transport chain"/>
    <property type="evidence" value="ECO:0007669"/>
    <property type="project" value="TreeGrafter"/>
</dbReference>
<dbReference type="GO" id="GO:0042128">
    <property type="term" value="P:nitrate assimilation"/>
    <property type="evidence" value="ECO:0007669"/>
    <property type="project" value="UniProtKB-UniRule"/>
</dbReference>
<dbReference type="CDD" id="cd00548">
    <property type="entry name" value="NrfA-like"/>
    <property type="match status" value="1"/>
</dbReference>
<dbReference type="FunFam" id="1.10.1130.10:FF:000002">
    <property type="entry name" value="Cytochrome c-552"/>
    <property type="match status" value="1"/>
</dbReference>
<dbReference type="FunFam" id="1.20.140.10:FF:000014">
    <property type="entry name" value="Cytochrome c-552"/>
    <property type="match status" value="1"/>
</dbReference>
<dbReference type="Gene3D" id="1.20.140.10">
    <property type="entry name" value="Butyryl-CoA Dehydrogenase, subunit A, domain 3"/>
    <property type="match status" value="1"/>
</dbReference>
<dbReference type="Gene3D" id="1.10.1130.10">
    <property type="entry name" value="Flavocytochrome C3, Chain A"/>
    <property type="match status" value="1"/>
</dbReference>
<dbReference type="HAMAP" id="MF_01182">
    <property type="entry name" value="Cytochrom_C552"/>
    <property type="match status" value="1"/>
</dbReference>
<dbReference type="InterPro" id="IPR003321">
    <property type="entry name" value="Cyt_c552"/>
</dbReference>
<dbReference type="InterPro" id="IPR017570">
    <property type="entry name" value="Cyt_c_NO2Rdtase_formate-dep"/>
</dbReference>
<dbReference type="InterPro" id="IPR036280">
    <property type="entry name" value="Multihaem_cyt_sf"/>
</dbReference>
<dbReference type="NCBIfam" id="TIGR03152">
    <property type="entry name" value="cyto_c552_HCOOH"/>
    <property type="match status" value="1"/>
</dbReference>
<dbReference type="NCBIfam" id="NF008339">
    <property type="entry name" value="PRK11125.1"/>
    <property type="match status" value="1"/>
</dbReference>
<dbReference type="PANTHER" id="PTHR30633:SF0">
    <property type="entry name" value="CYTOCHROME C-552"/>
    <property type="match status" value="1"/>
</dbReference>
<dbReference type="PANTHER" id="PTHR30633">
    <property type="entry name" value="CYTOCHROME C-552 RESPIRATORY NITRITE REDUCTASE"/>
    <property type="match status" value="1"/>
</dbReference>
<dbReference type="Pfam" id="PF02335">
    <property type="entry name" value="Cytochrom_C552"/>
    <property type="match status" value="1"/>
</dbReference>
<dbReference type="PIRSF" id="PIRSF000243">
    <property type="entry name" value="Cyt_c552"/>
    <property type="match status" value="1"/>
</dbReference>
<dbReference type="SUPFAM" id="SSF48695">
    <property type="entry name" value="Multiheme cytochromes"/>
    <property type="match status" value="1"/>
</dbReference>
<dbReference type="PROSITE" id="PS51008">
    <property type="entry name" value="MULTIHEME_CYTC"/>
    <property type="match status" value="1"/>
</dbReference>
<gene>
    <name evidence="1" type="primary">nrfA</name>
    <name type="ordered locus">VV1_3035</name>
</gene>
<accession>Q8D8E5</accession>
<sequence length="474" mass="53092">MSIKHWMASSVSVTALVMTALLNITAVSAEEKGLVDPRNDAFEQNHPDQYQSWKKTSESVEIEDALAEDPNMVILWAGYGFAKDYNKARGHFYALDDVRQTLRTGGPQDAKSGPMPMACWSCKSPDVARVIDERGEDGYFEGKWARLGAEIANPIGCADCHDTRSEKFKNGEPELALTRPYVERAFQAINKPFEQQSRLDKQASVCAQCHVEYYFTGPTKAVKFPWDMGTGVQQMEEYYDALGFADWTHAVSKAPMLKAQHPGFETWREGIHGKNKVVCVDCHMPKVKKEDGTVYTDHKVGNPFDRFEDTCAQCHTQSKDQLREIVSTRKAQVLNMKLTAEKQIVAAHFEAGAAWKAGATEEEMKPILQDIRHAQWRWDYAIASHGVHMHAPEVALEVLGTAVDRAADARTKLVRLLATKGITEPVQIPDISTKAAAQKALGMDMEKMNAEKQHFLKTVVPDWDKAAAERESKY</sequence>
<reference key="1">
    <citation type="submission" date="2002-12" db="EMBL/GenBank/DDBJ databases">
        <title>Complete genome sequence of Vibrio vulnificus CMCP6.</title>
        <authorList>
            <person name="Rhee J.H."/>
            <person name="Kim S.Y."/>
            <person name="Chung S.S."/>
            <person name="Kim J.J."/>
            <person name="Moon Y.H."/>
            <person name="Jeong H."/>
            <person name="Choy H.E."/>
        </authorList>
    </citation>
    <scope>NUCLEOTIDE SEQUENCE [LARGE SCALE GENOMIC DNA]</scope>
    <source>
        <strain>CMCP6</strain>
    </source>
</reference>
<comment type="function">
    <text evidence="1">Catalyzes the reduction of nitrite to ammonia, consuming six electrons in the process.</text>
</comment>
<comment type="catalytic activity">
    <reaction evidence="1">
        <text>6 Fe(III)-[cytochrome c] + NH4(+) + 2 H2O = 6 Fe(II)-[cytochrome c] + nitrite + 8 H(+)</text>
        <dbReference type="Rhea" id="RHEA:13089"/>
        <dbReference type="Rhea" id="RHEA-COMP:10350"/>
        <dbReference type="Rhea" id="RHEA-COMP:14399"/>
        <dbReference type="ChEBI" id="CHEBI:15377"/>
        <dbReference type="ChEBI" id="CHEBI:15378"/>
        <dbReference type="ChEBI" id="CHEBI:16301"/>
        <dbReference type="ChEBI" id="CHEBI:28938"/>
        <dbReference type="ChEBI" id="CHEBI:29033"/>
        <dbReference type="ChEBI" id="CHEBI:29034"/>
        <dbReference type="EC" id="1.7.2.2"/>
    </reaction>
</comment>
<comment type="cofactor">
    <cofactor evidence="1">
        <name>Ca(2+)</name>
        <dbReference type="ChEBI" id="CHEBI:29108"/>
    </cofactor>
    <text evidence="1">Binds 1 Ca(2+) ion per monomer.</text>
</comment>
<comment type="cofactor">
    <cofactor evidence="1">
        <name>heme c</name>
        <dbReference type="ChEBI" id="CHEBI:61717"/>
    </cofactor>
    <text evidence="1">Binds 5 heme c groups covalently per monomer.</text>
</comment>
<comment type="pathway">
    <text evidence="1">Nitrogen metabolism; nitrate reduction (assimilation).</text>
</comment>
<comment type="subcellular location">
    <subcellularLocation>
        <location evidence="1">Periplasm</location>
    </subcellularLocation>
</comment>
<comment type="similarity">
    <text evidence="1">Belongs to the cytochrome c-552 family.</text>
</comment>
<keyword id="KW-0106">Calcium</keyword>
<keyword id="KW-0249">Electron transport</keyword>
<keyword id="KW-0349">Heme</keyword>
<keyword id="KW-0408">Iron</keyword>
<keyword id="KW-0479">Metal-binding</keyword>
<keyword id="KW-0560">Oxidoreductase</keyword>
<keyword id="KW-0574">Periplasm</keyword>
<keyword id="KW-0732">Signal</keyword>
<keyword id="KW-0813">Transport</keyword>
<proteinExistence type="inferred from homology"/>
<feature type="signal peptide" evidence="1">
    <location>
        <begin position="1"/>
        <end position="29"/>
    </location>
</feature>
<feature type="chain" id="PRO_0000268983" description="Cytochrome c-552">
    <location>
        <begin position="30"/>
        <end position="474"/>
    </location>
</feature>
<feature type="binding site" description="axial binding residue" evidence="1">
    <location>
        <position position="91"/>
    </location>
    <ligand>
        <name>heme c</name>
        <dbReference type="ChEBI" id="CHEBI:61717"/>
        <label>3</label>
    </ligand>
    <ligandPart>
        <name>Fe</name>
        <dbReference type="ChEBI" id="CHEBI:18248"/>
    </ligandPart>
</feature>
<feature type="binding site" description="covalent" evidence="1">
    <location>
        <position position="119"/>
    </location>
    <ligand>
        <name>heme</name>
        <dbReference type="ChEBI" id="CHEBI:30413"/>
        <label>1</label>
    </ligand>
</feature>
<feature type="binding site" description="covalent" evidence="1">
    <location>
        <position position="122"/>
    </location>
    <ligand>
        <name>heme</name>
        <dbReference type="ChEBI" id="CHEBI:30413"/>
        <label>1</label>
    </ligand>
</feature>
<feature type="binding site" description="axial binding residue" evidence="1">
    <location>
        <position position="123"/>
    </location>
    <ligand>
        <name>heme</name>
        <dbReference type="ChEBI" id="CHEBI:30413"/>
        <label>1</label>
    </ligand>
    <ligandPart>
        <name>Fe</name>
        <dbReference type="ChEBI" id="CHEBI:18248"/>
    </ligandPart>
</feature>
<feature type="binding site" description="covalent" evidence="1">
    <location>
        <position position="157"/>
    </location>
    <ligand>
        <name>heme c</name>
        <dbReference type="ChEBI" id="CHEBI:61717"/>
        <label>2</label>
    </ligand>
</feature>
<feature type="binding site" description="covalent" evidence="1">
    <location>
        <position position="160"/>
    </location>
    <ligand>
        <name>heme c</name>
        <dbReference type="ChEBI" id="CHEBI:61717"/>
        <label>2</label>
    </ligand>
</feature>
<feature type="binding site" description="axial binding residue" evidence="1">
    <location>
        <position position="161"/>
    </location>
    <ligand>
        <name>heme c</name>
        <dbReference type="ChEBI" id="CHEBI:61717"/>
        <label>2</label>
    </ligand>
    <ligandPart>
        <name>Fe</name>
        <dbReference type="ChEBI" id="CHEBI:18248"/>
    </ligandPart>
</feature>
<feature type="binding site" description="covalent" evidence="1">
    <location>
        <position position="206"/>
    </location>
    <ligand>
        <name>heme c</name>
        <dbReference type="ChEBI" id="CHEBI:61717"/>
        <label>3</label>
    </ligand>
</feature>
<feature type="binding site" description="covalent" evidence="1">
    <location>
        <position position="209"/>
    </location>
    <ligand>
        <name>heme c</name>
        <dbReference type="ChEBI" id="CHEBI:61717"/>
        <label>3</label>
    </ligand>
</feature>
<feature type="binding site" description="axial binding residue" evidence="1">
    <location>
        <position position="210"/>
    </location>
    <ligand>
        <name>heme c</name>
        <dbReference type="ChEBI" id="CHEBI:61717"/>
        <label>3</label>
    </ligand>
    <ligandPart>
        <name>Fe</name>
        <dbReference type="ChEBI" id="CHEBI:18248"/>
    </ligandPart>
</feature>
<feature type="binding site" evidence="1">
    <location>
        <position position="212"/>
    </location>
    <ligand>
        <name>Ca(2+)</name>
        <dbReference type="ChEBI" id="CHEBI:29108"/>
    </ligand>
</feature>
<feature type="binding site" evidence="1">
    <location>
        <position position="213"/>
    </location>
    <ligand>
        <name>Ca(2+)</name>
        <dbReference type="ChEBI" id="CHEBI:29108"/>
    </ligand>
</feature>
<feature type="binding site" evidence="1">
    <location>
        <position position="213"/>
    </location>
    <ligand>
        <name>substrate</name>
    </ligand>
</feature>
<feature type="binding site" evidence="1">
    <location>
        <position position="258"/>
    </location>
    <ligand>
        <name>Ca(2+)</name>
        <dbReference type="ChEBI" id="CHEBI:29108"/>
    </ligand>
</feature>
<feature type="binding site" evidence="1">
    <location>
        <position position="260"/>
    </location>
    <ligand>
        <name>Ca(2+)</name>
        <dbReference type="ChEBI" id="CHEBI:29108"/>
    </ligand>
</feature>
<feature type="binding site" evidence="1">
    <location>
        <position position="261"/>
    </location>
    <ligand>
        <name>substrate</name>
    </ligand>
</feature>
<feature type="binding site" description="axial binding residue" evidence="1">
    <location>
        <position position="272"/>
    </location>
    <ligand>
        <name>heme c</name>
        <dbReference type="ChEBI" id="CHEBI:61717"/>
        <label>5</label>
    </ligand>
    <ligandPart>
        <name>Fe</name>
        <dbReference type="ChEBI" id="CHEBI:18248"/>
    </ligandPart>
</feature>
<feature type="binding site" description="covalent" evidence="1">
    <location>
        <position position="279"/>
    </location>
    <ligand>
        <name>heme c</name>
        <dbReference type="ChEBI" id="CHEBI:61717"/>
        <label>4</label>
    </ligand>
</feature>
<feature type="binding site" description="covalent" evidence="1">
    <location>
        <position position="282"/>
    </location>
    <ligand>
        <name>heme c</name>
        <dbReference type="ChEBI" id="CHEBI:61717"/>
        <label>4</label>
    </ligand>
</feature>
<feature type="binding site" description="axial binding residue" evidence="1">
    <location>
        <position position="283"/>
    </location>
    <ligand>
        <name>heme c</name>
        <dbReference type="ChEBI" id="CHEBI:61717"/>
        <label>4</label>
    </ligand>
    <ligandPart>
        <name>Fe</name>
        <dbReference type="ChEBI" id="CHEBI:18248"/>
    </ligandPart>
</feature>
<feature type="binding site" description="axial binding residue" evidence="1">
    <location>
        <position position="298"/>
    </location>
    <ligand>
        <name>heme c</name>
        <dbReference type="ChEBI" id="CHEBI:61717"/>
        <label>2</label>
    </ligand>
    <ligandPart>
        <name>Fe</name>
        <dbReference type="ChEBI" id="CHEBI:18248"/>
    </ligandPart>
</feature>
<feature type="binding site" description="covalent" evidence="1">
    <location>
        <position position="311"/>
    </location>
    <ligand>
        <name>heme c</name>
        <dbReference type="ChEBI" id="CHEBI:61717"/>
        <label>5</label>
    </ligand>
</feature>
<feature type="binding site" description="covalent" evidence="1">
    <location>
        <position position="314"/>
    </location>
    <ligand>
        <name>heme c</name>
        <dbReference type="ChEBI" id="CHEBI:61717"/>
        <label>5</label>
    </ligand>
</feature>
<feature type="binding site" description="axial binding residue" evidence="1">
    <location>
        <position position="315"/>
    </location>
    <ligand>
        <name>heme c</name>
        <dbReference type="ChEBI" id="CHEBI:61717"/>
        <label>5</label>
    </ligand>
    <ligandPart>
        <name>Fe</name>
        <dbReference type="ChEBI" id="CHEBI:18248"/>
    </ligandPart>
</feature>
<feature type="binding site" description="axial binding residue" evidence="1">
    <location>
        <position position="390"/>
    </location>
    <ligand>
        <name>heme c</name>
        <dbReference type="ChEBI" id="CHEBI:61717"/>
        <label>4</label>
    </ligand>
    <ligandPart>
        <name>Fe</name>
        <dbReference type="ChEBI" id="CHEBI:18248"/>
    </ligandPart>
</feature>
<evidence type="ECO:0000255" key="1">
    <source>
        <dbReference type="HAMAP-Rule" id="MF_01182"/>
    </source>
</evidence>
<organism>
    <name type="scientific">Vibrio vulnificus (strain CMCP6)</name>
    <dbReference type="NCBI Taxonomy" id="216895"/>
    <lineage>
        <taxon>Bacteria</taxon>
        <taxon>Pseudomonadati</taxon>
        <taxon>Pseudomonadota</taxon>
        <taxon>Gammaproteobacteria</taxon>
        <taxon>Vibrionales</taxon>
        <taxon>Vibrionaceae</taxon>
        <taxon>Vibrio</taxon>
    </lineage>
</organism>
<name>NRFA_VIBVU</name>
<protein>
    <recommendedName>
        <fullName evidence="1">Cytochrome c-552</fullName>
        <ecNumber evidence="1">1.7.2.2</ecNumber>
    </recommendedName>
    <alternativeName>
        <fullName evidence="1">Ammonia-forming cytochrome c nitrite reductase</fullName>
        <shortName evidence="1">Cytochrome c nitrite reductase</shortName>
    </alternativeName>
</protein>